<reference key="1">
    <citation type="journal article" date="1996" name="Microbiology">
        <title>Sequencing of a 65 kb region of the Bacillus subtilis genome containing the lic and cel loci, and creation of a 177 kb contig covering the gnt-sacXY region.</title>
        <authorList>
            <person name="Yoshida K."/>
            <person name="Shindo K."/>
            <person name="Sano H."/>
            <person name="Seki S."/>
            <person name="Fujimura M."/>
            <person name="Yanai N."/>
            <person name="Miwa Y."/>
            <person name="Fujita Y."/>
        </authorList>
    </citation>
    <scope>NUCLEOTIDE SEQUENCE [GENOMIC DNA]</scope>
    <source>
        <strain>168 / BGSC1A1</strain>
    </source>
</reference>
<reference key="2">
    <citation type="journal article" date="1997" name="Nature">
        <title>The complete genome sequence of the Gram-positive bacterium Bacillus subtilis.</title>
        <authorList>
            <person name="Kunst F."/>
            <person name="Ogasawara N."/>
            <person name="Moszer I."/>
            <person name="Albertini A.M."/>
            <person name="Alloni G."/>
            <person name="Azevedo V."/>
            <person name="Bertero M.G."/>
            <person name="Bessieres P."/>
            <person name="Bolotin A."/>
            <person name="Borchert S."/>
            <person name="Borriss R."/>
            <person name="Boursier L."/>
            <person name="Brans A."/>
            <person name="Braun M."/>
            <person name="Brignell S.C."/>
            <person name="Bron S."/>
            <person name="Brouillet S."/>
            <person name="Bruschi C.V."/>
            <person name="Caldwell B."/>
            <person name="Capuano V."/>
            <person name="Carter N.M."/>
            <person name="Choi S.-K."/>
            <person name="Codani J.-J."/>
            <person name="Connerton I.F."/>
            <person name="Cummings N.J."/>
            <person name="Daniel R.A."/>
            <person name="Denizot F."/>
            <person name="Devine K.M."/>
            <person name="Duesterhoeft A."/>
            <person name="Ehrlich S.D."/>
            <person name="Emmerson P.T."/>
            <person name="Entian K.-D."/>
            <person name="Errington J."/>
            <person name="Fabret C."/>
            <person name="Ferrari E."/>
            <person name="Foulger D."/>
            <person name="Fritz C."/>
            <person name="Fujita M."/>
            <person name="Fujita Y."/>
            <person name="Fuma S."/>
            <person name="Galizzi A."/>
            <person name="Galleron N."/>
            <person name="Ghim S.-Y."/>
            <person name="Glaser P."/>
            <person name="Goffeau A."/>
            <person name="Golightly E.J."/>
            <person name="Grandi G."/>
            <person name="Guiseppi G."/>
            <person name="Guy B.J."/>
            <person name="Haga K."/>
            <person name="Haiech J."/>
            <person name="Harwood C.R."/>
            <person name="Henaut A."/>
            <person name="Hilbert H."/>
            <person name="Holsappel S."/>
            <person name="Hosono S."/>
            <person name="Hullo M.-F."/>
            <person name="Itaya M."/>
            <person name="Jones L.-M."/>
            <person name="Joris B."/>
            <person name="Karamata D."/>
            <person name="Kasahara Y."/>
            <person name="Klaerr-Blanchard M."/>
            <person name="Klein C."/>
            <person name="Kobayashi Y."/>
            <person name="Koetter P."/>
            <person name="Koningstein G."/>
            <person name="Krogh S."/>
            <person name="Kumano M."/>
            <person name="Kurita K."/>
            <person name="Lapidus A."/>
            <person name="Lardinois S."/>
            <person name="Lauber J."/>
            <person name="Lazarevic V."/>
            <person name="Lee S.-M."/>
            <person name="Levine A."/>
            <person name="Liu H."/>
            <person name="Masuda S."/>
            <person name="Mauel C."/>
            <person name="Medigue C."/>
            <person name="Medina N."/>
            <person name="Mellado R.P."/>
            <person name="Mizuno M."/>
            <person name="Moestl D."/>
            <person name="Nakai S."/>
            <person name="Noback M."/>
            <person name="Noone D."/>
            <person name="O'Reilly M."/>
            <person name="Ogawa K."/>
            <person name="Ogiwara A."/>
            <person name="Oudega B."/>
            <person name="Park S.-H."/>
            <person name="Parro V."/>
            <person name="Pohl T.M."/>
            <person name="Portetelle D."/>
            <person name="Porwollik S."/>
            <person name="Prescott A.M."/>
            <person name="Presecan E."/>
            <person name="Pujic P."/>
            <person name="Purnelle B."/>
            <person name="Rapoport G."/>
            <person name="Rey M."/>
            <person name="Reynolds S."/>
            <person name="Rieger M."/>
            <person name="Rivolta C."/>
            <person name="Rocha E."/>
            <person name="Roche B."/>
            <person name="Rose M."/>
            <person name="Sadaie Y."/>
            <person name="Sato T."/>
            <person name="Scanlan E."/>
            <person name="Schleich S."/>
            <person name="Schroeter R."/>
            <person name="Scoffone F."/>
            <person name="Sekiguchi J."/>
            <person name="Sekowska A."/>
            <person name="Seror S.J."/>
            <person name="Serror P."/>
            <person name="Shin B.-S."/>
            <person name="Soldo B."/>
            <person name="Sorokin A."/>
            <person name="Tacconi E."/>
            <person name="Takagi T."/>
            <person name="Takahashi H."/>
            <person name="Takemaru K."/>
            <person name="Takeuchi M."/>
            <person name="Tamakoshi A."/>
            <person name="Tanaka T."/>
            <person name="Terpstra P."/>
            <person name="Tognoni A."/>
            <person name="Tosato V."/>
            <person name="Uchiyama S."/>
            <person name="Vandenbol M."/>
            <person name="Vannier F."/>
            <person name="Vassarotti A."/>
            <person name="Viari A."/>
            <person name="Wambutt R."/>
            <person name="Wedler E."/>
            <person name="Wedler H."/>
            <person name="Weitzenegger T."/>
            <person name="Winters P."/>
            <person name="Wipat A."/>
            <person name="Yamamoto H."/>
            <person name="Yamane K."/>
            <person name="Yasumoto K."/>
            <person name="Yata K."/>
            <person name="Yoshida K."/>
            <person name="Yoshikawa H.-F."/>
            <person name="Zumstein E."/>
            <person name="Yoshikawa H."/>
            <person name="Danchin A."/>
        </authorList>
    </citation>
    <scope>NUCLEOTIDE SEQUENCE [LARGE SCALE GENOMIC DNA]</scope>
    <source>
        <strain>168</strain>
    </source>
</reference>
<organism>
    <name type="scientific">Bacillus subtilis (strain 168)</name>
    <dbReference type="NCBI Taxonomy" id="224308"/>
    <lineage>
        <taxon>Bacteria</taxon>
        <taxon>Bacillati</taxon>
        <taxon>Bacillota</taxon>
        <taxon>Bacilli</taxon>
        <taxon>Bacillales</taxon>
        <taxon>Bacillaceae</taxon>
        <taxon>Bacillus</taxon>
    </lineage>
</organism>
<feature type="chain" id="PRO_0000183918" description="Cytochrome bd ubiquinol oxidase subunit 1">
    <location>
        <begin position="1"/>
        <end position="468"/>
    </location>
</feature>
<feature type="transmembrane region" description="Helical" evidence="3">
    <location>
        <begin position="15"/>
        <end position="35"/>
    </location>
</feature>
<feature type="transmembrane region" description="Helical" evidence="3">
    <location>
        <begin position="51"/>
        <end position="71"/>
    </location>
</feature>
<feature type="transmembrane region" description="Helical" evidence="3">
    <location>
        <begin position="95"/>
        <end position="115"/>
    </location>
</feature>
<feature type="transmembrane region" description="Helical" evidence="3">
    <location>
        <begin position="124"/>
        <end position="144"/>
    </location>
</feature>
<feature type="transmembrane region" description="Helical" evidence="3">
    <location>
        <begin position="177"/>
        <end position="197"/>
    </location>
</feature>
<feature type="transmembrane region" description="Helical" evidence="3">
    <location>
        <begin position="219"/>
        <end position="239"/>
    </location>
</feature>
<feature type="transmembrane region" description="Helical" evidence="3">
    <location>
        <begin position="331"/>
        <end position="351"/>
    </location>
</feature>
<feature type="transmembrane region" description="Helical" evidence="3">
    <location>
        <begin position="366"/>
        <end position="386"/>
    </location>
</feature>
<feature type="transmembrane region" description="Helical" evidence="3">
    <location>
        <begin position="416"/>
        <end position="436"/>
    </location>
</feature>
<feature type="region of interest" description="Disordered" evidence="4">
    <location>
        <begin position="448"/>
        <end position="468"/>
    </location>
</feature>
<feature type="binding site" description="axial binding residue" evidence="3">
    <location>
        <position position="18"/>
    </location>
    <ligand>
        <name>heme b</name>
        <dbReference type="ChEBI" id="CHEBI:60344"/>
        <label>b595</label>
    </ligand>
    <ligandPart>
        <name>Fe</name>
        <dbReference type="ChEBI" id="CHEBI:18248"/>
    </ligandPart>
</feature>
<feature type="binding site" description="axial binding residue" evidence="1">
    <location>
        <position position="183"/>
    </location>
    <ligand>
        <name>heme b</name>
        <dbReference type="ChEBI" id="CHEBI:60344"/>
        <label>b558</label>
    </ligand>
    <ligandPart>
        <name>Fe</name>
        <dbReference type="ChEBI" id="CHEBI:18248"/>
    </ligandPart>
</feature>
<feature type="binding site" description="axial binding residue" evidence="1">
    <location>
        <position position="334"/>
    </location>
    <ligand>
        <name>heme b</name>
        <dbReference type="ChEBI" id="CHEBI:60344"/>
        <label>b558</label>
    </ligand>
    <ligandPart>
        <name>Fe</name>
        <dbReference type="ChEBI" id="CHEBI:18248"/>
    </ligandPart>
</feature>
<name>CYDA_BACSU</name>
<gene>
    <name type="primary">cydA</name>
    <name type="synonym">yxkK</name>
    <name type="ordered locus">BSU38760</name>
</gene>
<sequence length="468" mass="52293">MSELVLARIQFASTTLFHFLFVPMSIGLVFMVALMETLYLVKKNELYLKMAKFWGHLFLINFAVGVVTGILQEFQFGLNWSDYSRFVGDVFGAPLAIEALLAFFMESIFIGLWIFGWDRLPKKIHALCIWLVSFGTIMSSFWILTANSFMQEPVGFTIKNGRAEMNDFGALITNPQLWVEFPHVIFGALATGAFFIAGVSAFKLLKKKEVPFFKQSFKLAMIVGLCAGLGVGLSGHMQAEHLMESQPMKMAASEGLWEDSGDPAAWTAFATIDTKNEKSSNEIKVPYALSYLAYQKFSGSVKGMKTLQAEYEKIYGKGDYIPPVKTTFWSFRIMVGAGVVMILAALGGLWLNRRKKLENSKWYLRIMIALISFPFLANSAGWIMTEIGRQPWTVMGLMTTAQSVSPNVTAGSLLFSIIAFGVMYMILGALLVFLFIREIKKGAEHDNHHDVPVSTDPFSQEVYHGISS</sequence>
<evidence type="ECO:0000250" key="1"/>
<evidence type="ECO:0000250" key="2">
    <source>
        <dbReference type="UniProtKB" id="P0ABJ9"/>
    </source>
</evidence>
<evidence type="ECO:0000255" key="3"/>
<evidence type="ECO:0000256" key="4">
    <source>
        <dbReference type="SAM" id="MobiDB-lite"/>
    </source>
</evidence>
<evidence type="ECO:0000305" key="5"/>
<dbReference type="EC" id="7.1.1.7" evidence="2"/>
<dbReference type="EMBL" id="D83026">
    <property type="protein sequence ID" value="BAA11727.1"/>
    <property type="molecule type" value="Genomic_DNA"/>
</dbReference>
<dbReference type="EMBL" id="AL009126">
    <property type="protein sequence ID" value="CAB15902.1"/>
    <property type="molecule type" value="Genomic_DNA"/>
</dbReference>
<dbReference type="PIR" id="A69611">
    <property type="entry name" value="A69611"/>
</dbReference>
<dbReference type="RefSeq" id="NP_391755.1">
    <property type="nucleotide sequence ID" value="NC_000964.3"/>
</dbReference>
<dbReference type="RefSeq" id="WP_003243795.1">
    <property type="nucleotide sequence ID" value="NZ_OZ025638.1"/>
</dbReference>
<dbReference type="SMR" id="P94364"/>
<dbReference type="FunCoup" id="P94364">
    <property type="interactions" value="301"/>
</dbReference>
<dbReference type="STRING" id="224308.BSU38760"/>
<dbReference type="jPOST" id="P94364"/>
<dbReference type="PaxDb" id="224308-BSU38760"/>
<dbReference type="EnsemblBacteria" id="CAB15902">
    <property type="protein sequence ID" value="CAB15902"/>
    <property type="gene ID" value="BSU_38760"/>
</dbReference>
<dbReference type="GeneID" id="937406"/>
<dbReference type="KEGG" id="bsu:BSU38760"/>
<dbReference type="PATRIC" id="fig|224308.179.peg.4195"/>
<dbReference type="eggNOG" id="COG1271">
    <property type="taxonomic scope" value="Bacteria"/>
</dbReference>
<dbReference type="InParanoid" id="P94364"/>
<dbReference type="OrthoDB" id="9807042at2"/>
<dbReference type="PhylomeDB" id="P94364"/>
<dbReference type="BioCyc" id="BSUB:BSU38760-MONOMER"/>
<dbReference type="BioCyc" id="MetaCyc:BSU38760-MONOMER"/>
<dbReference type="BRENDA" id="7.1.1.7">
    <property type="organism ID" value="658"/>
</dbReference>
<dbReference type="Proteomes" id="UP000001570">
    <property type="component" value="Chromosome"/>
</dbReference>
<dbReference type="GO" id="GO:0070069">
    <property type="term" value="C:cytochrome complex"/>
    <property type="evidence" value="ECO:0000318"/>
    <property type="project" value="GO_Central"/>
</dbReference>
<dbReference type="GO" id="GO:0005886">
    <property type="term" value="C:plasma membrane"/>
    <property type="evidence" value="ECO:0000318"/>
    <property type="project" value="GO_Central"/>
</dbReference>
<dbReference type="GO" id="GO:0009055">
    <property type="term" value="F:electron transfer activity"/>
    <property type="evidence" value="ECO:0000318"/>
    <property type="project" value="GO_Central"/>
</dbReference>
<dbReference type="GO" id="GO:0020037">
    <property type="term" value="F:heme binding"/>
    <property type="evidence" value="ECO:0000318"/>
    <property type="project" value="GO_Central"/>
</dbReference>
<dbReference type="GO" id="GO:0046872">
    <property type="term" value="F:metal ion binding"/>
    <property type="evidence" value="ECO:0007669"/>
    <property type="project" value="UniProtKB-KW"/>
</dbReference>
<dbReference type="GO" id="GO:0016682">
    <property type="term" value="F:oxidoreductase activity, acting on diphenols and related substances as donors, oxygen as acceptor"/>
    <property type="evidence" value="ECO:0000318"/>
    <property type="project" value="GO_Central"/>
</dbReference>
<dbReference type="GO" id="GO:0019646">
    <property type="term" value="P:aerobic electron transport chain"/>
    <property type="evidence" value="ECO:0000318"/>
    <property type="project" value="GO_Central"/>
</dbReference>
<dbReference type="InterPro" id="IPR002585">
    <property type="entry name" value="Cyt-d_ubiquinol_oxidase_su_1"/>
</dbReference>
<dbReference type="PANTHER" id="PTHR30365:SF15">
    <property type="entry name" value="CYTOCHROME BD UBIQUINOL OXIDASE SUBUNIT 1"/>
    <property type="match status" value="1"/>
</dbReference>
<dbReference type="PANTHER" id="PTHR30365">
    <property type="entry name" value="CYTOCHROME D UBIQUINOL OXIDASE"/>
    <property type="match status" value="1"/>
</dbReference>
<dbReference type="Pfam" id="PF01654">
    <property type="entry name" value="Cyt_bd_oxida_I"/>
    <property type="match status" value="1"/>
</dbReference>
<dbReference type="PIRSF" id="PIRSF006446">
    <property type="entry name" value="Cyt_quinol_oxidase_1"/>
    <property type="match status" value="1"/>
</dbReference>
<proteinExistence type="inferred from homology"/>
<comment type="catalytic activity">
    <reaction evidence="2">
        <text>2 a ubiquinol + O2(in) + 4 H(+)(in) = 2 a ubiquinone + 2 H2O(in) + 4 H(+)(out)</text>
        <dbReference type="Rhea" id="RHEA:40527"/>
        <dbReference type="Rhea" id="RHEA-COMP:9565"/>
        <dbReference type="Rhea" id="RHEA-COMP:9566"/>
        <dbReference type="ChEBI" id="CHEBI:15377"/>
        <dbReference type="ChEBI" id="CHEBI:15378"/>
        <dbReference type="ChEBI" id="CHEBI:15379"/>
        <dbReference type="ChEBI" id="CHEBI:16389"/>
        <dbReference type="ChEBI" id="CHEBI:17976"/>
        <dbReference type="EC" id="7.1.1.7"/>
    </reaction>
</comment>
<comment type="cofactor">
    <cofactor evidence="2">
        <name>heme b</name>
        <dbReference type="ChEBI" id="CHEBI:60344"/>
    </cofactor>
    <text evidence="2">Binds 1 protoheme IX center (heme b558) per subunit.</text>
</comment>
<comment type="cofactor">
    <cofactor evidence="2">
        <name>heme b</name>
        <dbReference type="ChEBI" id="CHEBI:60344"/>
    </cofactor>
    <text evidence="2">Binds 1 protoheme IX center (heme b595) per heterodimer, in conjunction with CydB.</text>
</comment>
<comment type="cofactor">
    <cofactor evidence="2">
        <name>heme d cis-diol</name>
        <dbReference type="ChEBI" id="CHEBI:62814"/>
    </cofactor>
    <text evidence="2">Binds 1 iron-chlorin (heme d or cytochrome d) per heterodimer, in conjunction with CydB.</text>
</comment>
<comment type="subunit">
    <text evidence="2">Heterodimer of subunits I and II.</text>
</comment>
<comment type="subcellular location">
    <subcellularLocation>
        <location evidence="5">Cell membrane</location>
        <topology evidence="5">Multi-pass membrane protein</topology>
    </subcellularLocation>
</comment>
<comment type="similarity">
    <text evidence="5">Belongs to the cytochrome ubiquinol oxidase subunit 1 family.</text>
</comment>
<keyword id="KW-1003">Cell membrane</keyword>
<keyword id="KW-0249">Electron transport</keyword>
<keyword id="KW-0349">Heme</keyword>
<keyword id="KW-0408">Iron</keyword>
<keyword id="KW-0472">Membrane</keyword>
<keyword id="KW-0479">Metal-binding</keyword>
<keyword id="KW-0560">Oxidoreductase</keyword>
<keyword id="KW-1185">Reference proteome</keyword>
<keyword id="KW-1278">Translocase</keyword>
<keyword id="KW-0812">Transmembrane</keyword>
<keyword id="KW-1133">Transmembrane helix</keyword>
<keyword id="KW-0813">Transport</keyword>
<protein>
    <recommendedName>
        <fullName>Cytochrome bd ubiquinol oxidase subunit 1</fullName>
        <ecNumber evidence="2">7.1.1.7</ecNumber>
    </recommendedName>
    <alternativeName>
        <fullName>Cytochrome d ubiquinol oxidase subunit I</fullName>
    </alternativeName>
</protein>
<accession>P94364</accession>